<comment type="function">
    <text evidence="1">Regulates phosphorylation of a number of proteins involved in translation regulation including EIF2A, EIF4EBP1 and RPS6KB1. May be involved in the endoplasmic reticulum stress response (By similarity).</text>
</comment>
<comment type="subcellular location">
    <subcellularLocation>
        <location evidence="6">Cytoplasm</location>
    </subcellularLocation>
    <subcellularLocation>
        <location evidence="2">Membrane</location>
        <topology evidence="2">Lipid-anchor</topology>
    </subcellularLocation>
</comment>
<comment type="tissue specificity">
    <text evidence="5 6">Detected in brain, lung, spleen and skeletal muscle. Expressed in small renal tumors but not in normal kidney.</text>
</comment>
<comment type="miscellaneous">
    <text evidence="5">'Niban' means 'second' in Japanese.</text>
</comment>
<comment type="similarity">
    <text evidence="3">Belongs to the Niban family.</text>
</comment>
<comment type="sequence caution" evidence="8">
    <conflict type="erroneous initiation">
        <sequence resource="EMBL-CDS" id="BAB15951"/>
    </conflict>
    <text>Truncated N-terminus.</text>
</comment>
<organism>
    <name type="scientific">Rattus norvegicus</name>
    <name type="common">Rat</name>
    <dbReference type="NCBI Taxonomy" id="10116"/>
    <lineage>
        <taxon>Eukaryota</taxon>
        <taxon>Metazoa</taxon>
        <taxon>Chordata</taxon>
        <taxon>Craniata</taxon>
        <taxon>Vertebrata</taxon>
        <taxon>Euteleostomi</taxon>
        <taxon>Mammalia</taxon>
        <taxon>Eutheria</taxon>
        <taxon>Euarchontoglires</taxon>
        <taxon>Glires</taxon>
        <taxon>Rodentia</taxon>
        <taxon>Myomorpha</taxon>
        <taxon>Muroidea</taxon>
        <taxon>Muridae</taxon>
        <taxon>Murinae</taxon>
        <taxon>Rattus</taxon>
    </lineage>
</organism>
<reference evidence="8 9" key="1">
    <citation type="journal article" date="2000" name="Jpn. J. Cancer Res.">
        <title>A novel gene 'Niban' upregulated in renal carcinogenesis: cloning by the cDNA-amplified fragment length polymorphism approach.</title>
        <authorList>
            <person name="Majima S."/>
            <person name="Kajino K."/>
            <person name="Fukuda T."/>
            <person name="Otsuka F."/>
            <person name="Hino O."/>
        </authorList>
    </citation>
    <scope>NUCLEOTIDE SEQUENCE [MRNA]</scope>
    <scope>TISSUE SPECIFICITY</scope>
    <source>
        <tissue evidence="9">Renal cell carcinoma</tissue>
    </source>
</reference>
<reference evidence="8" key="2">
    <citation type="journal article" date="2004" name="Oncogene">
        <title>Niban gene is commonly expressed in the renal tumors: a new candidate marker for renal carcinogenesis.</title>
        <authorList>
            <person name="Adachi H."/>
            <person name="Majima S."/>
            <person name="Kon S."/>
            <person name="Kobayashi T."/>
            <person name="Kajino K."/>
            <person name="Mitani H."/>
            <person name="Hirayama Y."/>
            <person name="Shiina H."/>
            <person name="Igawa M."/>
            <person name="Hino O."/>
        </authorList>
    </citation>
    <scope>SUBCELLULAR LOCATION</scope>
    <scope>TISSUE SPECIFICITY</scope>
</reference>
<reference key="3">
    <citation type="journal article" date="2012" name="Nat. Commun.">
        <title>Quantitative maps of protein phosphorylation sites across 14 different rat organs and tissues.</title>
        <authorList>
            <person name="Lundby A."/>
            <person name="Secher A."/>
            <person name="Lage K."/>
            <person name="Nordsborg N.B."/>
            <person name="Dmytriyev A."/>
            <person name="Lundby C."/>
            <person name="Olsen J.V."/>
        </authorList>
    </citation>
    <scope>PHOSPHORYLATION [LARGE SCALE ANALYSIS] AT SER-578; SER-581; SER-601 AND SER-768</scope>
    <scope>IDENTIFICATION BY MASS SPECTROMETRY [LARGE SCALE ANALYSIS]</scope>
</reference>
<feature type="initiator methionine" description="Removed" evidence="2">
    <location>
        <position position="1"/>
    </location>
</feature>
<feature type="chain" id="PRO_0000355584" description="Protein Niban 1">
    <location>
        <begin position="2"/>
        <end position="937"/>
    </location>
</feature>
<feature type="region of interest" description="Disordered" evidence="4">
    <location>
        <begin position="584"/>
        <end position="710"/>
    </location>
</feature>
<feature type="region of interest" description="Disordered" evidence="4">
    <location>
        <begin position="724"/>
        <end position="891"/>
    </location>
</feature>
<feature type="compositionally biased region" description="Polar residues" evidence="4">
    <location>
        <begin position="584"/>
        <end position="595"/>
    </location>
</feature>
<feature type="compositionally biased region" description="Low complexity" evidence="4">
    <location>
        <begin position="640"/>
        <end position="651"/>
    </location>
</feature>
<feature type="compositionally biased region" description="Polar residues" evidence="4">
    <location>
        <begin position="655"/>
        <end position="681"/>
    </location>
</feature>
<feature type="compositionally biased region" description="Basic and acidic residues" evidence="4">
    <location>
        <begin position="688"/>
        <end position="701"/>
    </location>
</feature>
<feature type="compositionally biased region" description="Polar residues" evidence="4">
    <location>
        <begin position="802"/>
        <end position="817"/>
    </location>
</feature>
<feature type="compositionally biased region" description="Polar residues" evidence="4">
    <location>
        <begin position="855"/>
        <end position="869"/>
    </location>
</feature>
<feature type="modified residue" description="Phosphoserine" evidence="11">
    <location>
        <position position="578"/>
    </location>
</feature>
<feature type="modified residue" description="Phosphoserine" evidence="11">
    <location>
        <position position="581"/>
    </location>
</feature>
<feature type="modified residue" description="Phosphoserine" evidence="2">
    <location>
        <position position="595"/>
    </location>
</feature>
<feature type="modified residue" description="Phosphoserine" evidence="11">
    <location>
        <position position="601"/>
    </location>
</feature>
<feature type="modified residue" description="Phosphoserine" evidence="2">
    <location>
        <position position="646"/>
    </location>
</feature>
<feature type="modified residue" description="Phosphoserine" evidence="2">
    <location>
        <position position="708"/>
    </location>
</feature>
<feature type="modified residue" description="Phosphoserine" evidence="11">
    <location>
        <position position="768"/>
    </location>
</feature>
<feature type="lipid moiety-binding region" description="N-myristoyl glycine" evidence="2">
    <location>
        <position position="2"/>
    </location>
</feature>
<sequence>MGGSASSQLDEGKCAYIRGKTEASIKNFSPYYSRQYSVAFCNHVRSEVEQQRDLTSQFLKTKPPLEPGTVLYEAELSQFAEDIRKWKDRYVVVKNDFAVESYENKEAYQRGAVPKSRILPAGGKVLTSEEEYSLLSDKHFPDPTASSEKNSQPFLVLPKAFPVYLWQPYLRHGYFCFHEAAEQQKFSALLNDCIRHLNHDYMKQTTFEAQAFLEAVQFFRQEKGHYGAWEVITGDEVQILSKLVMEELLPTLQTDLLPKLKGKKNDRKRAWFGLLEEAYNLVQHQVSEGLSALKEECRALTKDLEGTIRSDMDQIVNSKNFLTGKIRAMVAQPAENRCGESVQPFLASILEELMGPVSSGFSEVRALFEKEVDELSQSFHTTQDGAQLKECLDQLMKLPLDSVKMEPCYTKVTLLPERLLDLQSRFRFPHVDLVVQRTQNYMQELMENAVFTFEQLLSPYLQGEASRTAVAIEKVKLRVLKQYDYDSSTIRKKIFQEALIQITLPTVQKALASTCKPELQKYEQFIFADHTNMIHVENIYEEILYQILLDETLKVITEAAILKKHNLFEDNMALPSESVSSLTDLKTSMGSNQASPARGASAILPGAPGDEAPGSEVFQGPEEKQQQPGVPGSLAREESASISGSSPPSGEDGQVSVSGVDNSAGNPLSADNSAGPLSSHLSEAEAGEPPKDEETAHKRPESSAVPGSLRELKELLTVTVFVESAPEIGNDTLNGTPVPQEDKKEEEEEEESKIHPEASGPAAIQQDSCEESEVREREAHPMPLEAEAPGVNLGTLPEGRGPTSQSTGEGLTENTSCLGPIEEPSEAQGPTEEVLLATVSTQDSTEAGGEAVHSVTVTPQEDATLSSNPICPVENNEGPQVSEDQEVLGGNDSPALAMDTEQINDAHVYECHWEVEDAPSADILDVHDCDVGSPGEW</sequence>
<name>NIBA1_RAT</name>
<proteinExistence type="evidence at protein level"/>
<accession>Q9ESN0</accession>
<gene>
    <name evidence="10" type="primary">Niban1</name>
    <name type="synonym">Fam129a</name>
    <name evidence="8" type="synonym">Niban</name>
</gene>
<keyword id="KW-0963">Cytoplasm</keyword>
<keyword id="KW-0449">Lipoprotein</keyword>
<keyword id="KW-0472">Membrane</keyword>
<keyword id="KW-0519">Myristate</keyword>
<keyword id="KW-0597">Phosphoprotein</keyword>
<keyword id="KW-1185">Reference proteome</keyword>
<keyword id="KW-0346">Stress response</keyword>
<keyword id="KW-0810">Translation regulation</keyword>
<protein>
    <recommendedName>
        <fullName evidence="8">Protein Niban 1</fullName>
    </recommendedName>
    <alternativeName>
        <fullName>Protein FAM129A</fullName>
    </alternativeName>
    <alternativeName>
        <fullName evidence="7">Protein Niban</fullName>
    </alternativeName>
</protein>
<dbReference type="EMBL" id="AB046718">
    <property type="protein sequence ID" value="BAB15951.1"/>
    <property type="status" value="ALT_INIT"/>
    <property type="molecule type" value="mRNA"/>
</dbReference>
<dbReference type="RefSeq" id="NP_071578.2">
    <property type="nucleotide sequence ID" value="NM_022242.2"/>
</dbReference>
<dbReference type="SMR" id="Q9ESN0"/>
<dbReference type="FunCoup" id="Q9ESN0">
    <property type="interactions" value="262"/>
</dbReference>
<dbReference type="IntAct" id="Q9ESN0">
    <property type="interactions" value="1"/>
</dbReference>
<dbReference type="GlyGen" id="Q9ESN0">
    <property type="glycosylation" value="1 site"/>
</dbReference>
<dbReference type="iPTMnet" id="Q9ESN0"/>
<dbReference type="PhosphoSitePlus" id="Q9ESN0"/>
<dbReference type="PaxDb" id="10116-ENSRNOP00000003320"/>
<dbReference type="Ensembl" id="ENSRNOT00000003320.7">
    <property type="protein sequence ID" value="ENSRNOP00000003320.4"/>
    <property type="gene ID" value="ENSRNOG00000002403.7"/>
</dbReference>
<dbReference type="GeneID" id="63912"/>
<dbReference type="KEGG" id="rno:63912"/>
<dbReference type="UCSC" id="RGD:71088">
    <property type="organism name" value="rat"/>
</dbReference>
<dbReference type="AGR" id="RGD:71088"/>
<dbReference type="CTD" id="116496"/>
<dbReference type="RGD" id="71088">
    <property type="gene designation" value="Niban1"/>
</dbReference>
<dbReference type="eggNOG" id="ENOG502QVNR">
    <property type="taxonomic scope" value="Eukaryota"/>
</dbReference>
<dbReference type="GeneTree" id="ENSGT00940000154149"/>
<dbReference type="HOGENOM" id="CLU_009718_0_1_1"/>
<dbReference type="InParanoid" id="Q9ESN0"/>
<dbReference type="OMA" id="VARVHEC"/>
<dbReference type="OrthoDB" id="9010513at2759"/>
<dbReference type="PhylomeDB" id="Q9ESN0"/>
<dbReference type="TreeFam" id="TF333351"/>
<dbReference type="PRO" id="PR:Q9ESN0"/>
<dbReference type="Proteomes" id="UP000002494">
    <property type="component" value="Chromosome 13"/>
</dbReference>
<dbReference type="Bgee" id="ENSRNOG00000002403">
    <property type="expression patterns" value="Expressed in esophagus and 18 other cell types or tissues"/>
</dbReference>
<dbReference type="GO" id="GO:0005737">
    <property type="term" value="C:cytoplasm"/>
    <property type="evidence" value="ECO:0000250"/>
    <property type="project" value="UniProtKB"/>
</dbReference>
<dbReference type="GO" id="GO:0016020">
    <property type="term" value="C:membrane"/>
    <property type="evidence" value="ECO:0007669"/>
    <property type="project" value="UniProtKB-SubCell"/>
</dbReference>
<dbReference type="GO" id="GO:0001933">
    <property type="term" value="P:negative regulation of protein phosphorylation"/>
    <property type="evidence" value="ECO:0000250"/>
    <property type="project" value="UniProtKB"/>
</dbReference>
<dbReference type="GO" id="GO:0001934">
    <property type="term" value="P:positive regulation of protein phosphorylation"/>
    <property type="evidence" value="ECO:0000250"/>
    <property type="project" value="UniProtKB"/>
</dbReference>
<dbReference type="GO" id="GO:0045727">
    <property type="term" value="P:positive regulation of translation"/>
    <property type="evidence" value="ECO:0000250"/>
    <property type="project" value="UniProtKB"/>
</dbReference>
<dbReference type="GO" id="GO:0034976">
    <property type="term" value="P:response to endoplasmic reticulum stress"/>
    <property type="evidence" value="ECO:0000250"/>
    <property type="project" value="UniProtKB"/>
</dbReference>
<dbReference type="CDD" id="cd23949">
    <property type="entry name" value="Niban-like"/>
    <property type="match status" value="1"/>
</dbReference>
<dbReference type="InterPro" id="IPR026088">
    <property type="entry name" value="Niban-like"/>
</dbReference>
<dbReference type="PANTHER" id="PTHR14392">
    <property type="entry name" value="NIBAN FAMILY MEMBER"/>
    <property type="match status" value="1"/>
</dbReference>
<dbReference type="PANTHER" id="PTHR14392:SF3">
    <property type="entry name" value="PROTEIN NIBAN 1"/>
    <property type="match status" value="1"/>
</dbReference>
<evidence type="ECO:0000250" key="1">
    <source>
        <dbReference type="UniProtKB" id="Q3UW53"/>
    </source>
</evidence>
<evidence type="ECO:0000250" key="2">
    <source>
        <dbReference type="UniProtKB" id="Q9BZQ8"/>
    </source>
</evidence>
<evidence type="ECO:0000255" key="3"/>
<evidence type="ECO:0000256" key="4">
    <source>
        <dbReference type="SAM" id="MobiDB-lite"/>
    </source>
</evidence>
<evidence type="ECO:0000269" key="5">
    <source>
    </source>
</evidence>
<evidence type="ECO:0000269" key="6">
    <source>
    </source>
</evidence>
<evidence type="ECO:0000303" key="7">
    <source>
    </source>
</evidence>
<evidence type="ECO:0000305" key="8"/>
<evidence type="ECO:0000312" key="9">
    <source>
        <dbReference type="EMBL" id="BAB15951.1"/>
    </source>
</evidence>
<evidence type="ECO:0000312" key="10">
    <source>
        <dbReference type="RGD" id="71088"/>
    </source>
</evidence>
<evidence type="ECO:0007744" key="11">
    <source>
    </source>
</evidence>